<feature type="chain" id="PRO_1000120726" description="Small ribosomal subunit protein bS6">
    <location>
        <begin position="1"/>
        <end position="112"/>
    </location>
</feature>
<organism>
    <name type="scientific">Chlamydia trachomatis serovar L2 (strain ATCC VR-902B / DSM 19102 / 434/Bu)</name>
    <dbReference type="NCBI Taxonomy" id="471472"/>
    <lineage>
        <taxon>Bacteria</taxon>
        <taxon>Pseudomonadati</taxon>
        <taxon>Chlamydiota</taxon>
        <taxon>Chlamydiia</taxon>
        <taxon>Chlamydiales</taxon>
        <taxon>Chlamydiaceae</taxon>
        <taxon>Chlamydia/Chlamydophila group</taxon>
        <taxon>Chlamydia</taxon>
    </lineage>
</organism>
<accession>B0B928</accession>
<proteinExistence type="inferred from homology"/>
<name>RS6_CHLT2</name>
<sequence>MKKKTGQLYEGAYVFSVTLSEDARRKALEKVTSGITNYGGEVLKIHDQGRKKLAYTIRGAREGYYYFIYFTVAPEAIAELWREYHLNEDLLRFMTLKASAVKEVLEFATLPE</sequence>
<protein>
    <recommendedName>
        <fullName evidence="1">Small ribosomal subunit protein bS6</fullName>
    </recommendedName>
    <alternativeName>
        <fullName evidence="2">30S ribosomal protein S6</fullName>
    </alternativeName>
</protein>
<dbReference type="EMBL" id="AM884176">
    <property type="protein sequence ID" value="CAP03615.1"/>
    <property type="molecule type" value="Genomic_DNA"/>
</dbReference>
<dbReference type="RefSeq" id="WP_009872183.1">
    <property type="nucleotide sequence ID" value="NC_010287.1"/>
</dbReference>
<dbReference type="RefSeq" id="YP_001654261.1">
    <property type="nucleotide sequence ID" value="NC_010287.1"/>
</dbReference>
<dbReference type="SMR" id="B0B928"/>
<dbReference type="KEGG" id="ctb:CTL0170"/>
<dbReference type="PATRIC" id="fig|471472.4.peg.184"/>
<dbReference type="HOGENOM" id="CLU_113441_5_2_0"/>
<dbReference type="Proteomes" id="UP001154402">
    <property type="component" value="Chromosome"/>
</dbReference>
<dbReference type="GO" id="GO:0005737">
    <property type="term" value="C:cytoplasm"/>
    <property type="evidence" value="ECO:0007669"/>
    <property type="project" value="UniProtKB-ARBA"/>
</dbReference>
<dbReference type="GO" id="GO:1990904">
    <property type="term" value="C:ribonucleoprotein complex"/>
    <property type="evidence" value="ECO:0007669"/>
    <property type="project" value="UniProtKB-KW"/>
</dbReference>
<dbReference type="GO" id="GO:0005840">
    <property type="term" value="C:ribosome"/>
    <property type="evidence" value="ECO:0007669"/>
    <property type="project" value="UniProtKB-KW"/>
</dbReference>
<dbReference type="GO" id="GO:0070181">
    <property type="term" value="F:small ribosomal subunit rRNA binding"/>
    <property type="evidence" value="ECO:0007669"/>
    <property type="project" value="TreeGrafter"/>
</dbReference>
<dbReference type="GO" id="GO:0003735">
    <property type="term" value="F:structural constituent of ribosome"/>
    <property type="evidence" value="ECO:0007669"/>
    <property type="project" value="InterPro"/>
</dbReference>
<dbReference type="GO" id="GO:0006412">
    <property type="term" value="P:translation"/>
    <property type="evidence" value="ECO:0007669"/>
    <property type="project" value="UniProtKB-UniRule"/>
</dbReference>
<dbReference type="CDD" id="cd00473">
    <property type="entry name" value="bS6"/>
    <property type="match status" value="1"/>
</dbReference>
<dbReference type="Gene3D" id="3.30.70.60">
    <property type="match status" value="1"/>
</dbReference>
<dbReference type="HAMAP" id="MF_00360">
    <property type="entry name" value="Ribosomal_bS6"/>
    <property type="match status" value="1"/>
</dbReference>
<dbReference type="InterPro" id="IPR000529">
    <property type="entry name" value="Ribosomal_bS6"/>
</dbReference>
<dbReference type="InterPro" id="IPR035980">
    <property type="entry name" value="Ribosomal_bS6_sf"/>
</dbReference>
<dbReference type="InterPro" id="IPR020814">
    <property type="entry name" value="Ribosomal_S6_plastid/chlpt"/>
</dbReference>
<dbReference type="InterPro" id="IPR014717">
    <property type="entry name" value="Transl_elong_EF1B/ribsomal_bS6"/>
</dbReference>
<dbReference type="NCBIfam" id="TIGR00166">
    <property type="entry name" value="S6"/>
    <property type="match status" value="1"/>
</dbReference>
<dbReference type="PANTHER" id="PTHR21011">
    <property type="entry name" value="MITOCHONDRIAL 28S RIBOSOMAL PROTEIN S6"/>
    <property type="match status" value="1"/>
</dbReference>
<dbReference type="PANTHER" id="PTHR21011:SF1">
    <property type="entry name" value="SMALL RIBOSOMAL SUBUNIT PROTEIN BS6M"/>
    <property type="match status" value="1"/>
</dbReference>
<dbReference type="Pfam" id="PF01250">
    <property type="entry name" value="Ribosomal_S6"/>
    <property type="match status" value="1"/>
</dbReference>
<dbReference type="SUPFAM" id="SSF54995">
    <property type="entry name" value="Ribosomal protein S6"/>
    <property type="match status" value="1"/>
</dbReference>
<gene>
    <name evidence="1" type="primary">rpsF</name>
    <name type="ordered locus">CTL0170</name>
</gene>
<keyword id="KW-0687">Ribonucleoprotein</keyword>
<keyword id="KW-0689">Ribosomal protein</keyword>
<keyword id="KW-0694">RNA-binding</keyword>
<keyword id="KW-0699">rRNA-binding</keyword>
<evidence type="ECO:0000255" key="1">
    <source>
        <dbReference type="HAMAP-Rule" id="MF_00360"/>
    </source>
</evidence>
<evidence type="ECO:0000305" key="2"/>
<reference key="1">
    <citation type="journal article" date="2008" name="Genome Res.">
        <title>Chlamydia trachomatis: genome sequence analysis of lymphogranuloma venereum isolates.</title>
        <authorList>
            <person name="Thomson N.R."/>
            <person name="Holden M.T.G."/>
            <person name="Carder C."/>
            <person name="Lennard N."/>
            <person name="Lockey S.J."/>
            <person name="Marsh P."/>
            <person name="Skipp P."/>
            <person name="O'Connor C.D."/>
            <person name="Goodhead I."/>
            <person name="Norbertzcak H."/>
            <person name="Harris B."/>
            <person name="Ormond D."/>
            <person name="Rance R."/>
            <person name="Quail M.A."/>
            <person name="Parkhill J."/>
            <person name="Stephens R.S."/>
            <person name="Clarke I.N."/>
        </authorList>
    </citation>
    <scope>NUCLEOTIDE SEQUENCE [LARGE SCALE GENOMIC DNA]</scope>
    <source>
        <strain>ATCC VR-902B / DSM 19102 / 434/Bu</strain>
    </source>
</reference>
<comment type="function">
    <text evidence="1">Binds together with bS18 to 16S ribosomal RNA.</text>
</comment>
<comment type="similarity">
    <text evidence="1">Belongs to the bacterial ribosomal protein bS6 family.</text>
</comment>